<protein>
    <recommendedName>
        <fullName evidence="16">Tripartite motif-containing protein 72</fullName>
        <ecNumber evidence="12">2.3.2.27</ecNumber>
    </recommendedName>
    <alternativeName>
        <fullName evidence="15">Mitsugumin-53</fullName>
        <shortName>Mg53</shortName>
    </alternativeName>
</protein>
<dbReference type="EC" id="2.3.2.27" evidence="12"/>
<dbReference type="EMBL" id="AK090695">
    <property type="protein sequence ID" value="BAC03506.1"/>
    <property type="status" value="ALT_INIT"/>
    <property type="molecule type" value="mRNA"/>
</dbReference>
<dbReference type="EMBL" id="AK131485">
    <property type="protein sequence ID" value="BAD18630.1"/>
    <property type="molecule type" value="mRNA"/>
</dbReference>
<dbReference type="EMBL" id="AC009088">
    <property type="status" value="NOT_ANNOTATED_CDS"/>
    <property type="molecule type" value="Genomic_DNA"/>
</dbReference>
<dbReference type="EMBL" id="BC033211">
    <property type="protein sequence ID" value="AAH33211.1"/>
    <property type="molecule type" value="mRNA"/>
</dbReference>
<dbReference type="CCDS" id="CCDS32437.1">
    <molecule id="Q6ZMU5-1"/>
</dbReference>
<dbReference type="RefSeq" id="NP_001008275.2">
    <molecule id="Q6ZMU5-1"/>
    <property type="nucleotide sequence ID" value="NM_001008274.4"/>
</dbReference>
<dbReference type="PDB" id="3KB5">
    <property type="method" value="X-ray"/>
    <property type="resolution" value="1.50 A"/>
    <property type="chains" value="A=278-470"/>
</dbReference>
<dbReference type="PDB" id="7XT2">
    <property type="method" value="X-ray"/>
    <property type="resolution" value="3.00 A"/>
    <property type="chains" value="A/B=1-477"/>
</dbReference>
<dbReference type="PDB" id="7Y4S">
    <property type="method" value="EM"/>
    <property type="resolution" value="3.50 A"/>
    <property type="chains" value="A/B=1-477"/>
</dbReference>
<dbReference type="PDBsum" id="3KB5"/>
<dbReference type="PDBsum" id="7XT2"/>
<dbReference type="PDBsum" id="7Y4S"/>
<dbReference type="EMDB" id="EMD-33606"/>
<dbReference type="SMR" id="Q6ZMU5"/>
<dbReference type="BioGRID" id="138920">
    <property type="interactions" value="56"/>
</dbReference>
<dbReference type="FunCoup" id="Q6ZMU5">
    <property type="interactions" value="64"/>
</dbReference>
<dbReference type="IntAct" id="Q6ZMU5">
    <property type="interactions" value="24"/>
</dbReference>
<dbReference type="MINT" id="Q6ZMU5"/>
<dbReference type="STRING" id="9606.ENSP00000312675"/>
<dbReference type="TCDB" id="1.F.1.2.1">
    <property type="family name" value="the synaptosomal vesicle fusion pore (svf-pore) family"/>
</dbReference>
<dbReference type="TCDB" id="1.F.1.2.3">
    <property type="family name" value="the synaptosomal vesicle fusion pore (svf-pore) family"/>
</dbReference>
<dbReference type="iPTMnet" id="Q6ZMU5"/>
<dbReference type="PhosphoSitePlus" id="Q6ZMU5"/>
<dbReference type="BioMuta" id="TRIM72"/>
<dbReference type="DMDM" id="126253816"/>
<dbReference type="MassIVE" id="Q6ZMU5"/>
<dbReference type="PaxDb" id="9606-ENSP00000312675"/>
<dbReference type="PeptideAtlas" id="Q6ZMU5"/>
<dbReference type="ProteomicsDB" id="67918">
    <molecule id="Q6ZMU5-1"/>
</dbReference>
<dbReference type="ProteomicsDB" id="67919">
    <molecule id="Q6ZMU5-2"/>
</dbReference>
<dbReference type="Pumba" id="Q6ZMU5"/>
<dbReference type="Antibodypedia" id="14026">
    <property type="antibodies" value="214 antibodies from 32 providers"/>
</dbReference>
<dbReference type="DNASU" id="493829"/>
<dbReference type="Ensembl" id="ENST00000322122.8">
    <molecule id="Q6ZMU5-1"/>
    <property type="protein sequence ID" value="ENSP00000312675.3"/>
    <property type="gene ID" value="ENSG00000177238.15"/>
</dbReference>
<dbReference type="GeneID" id="493829"/>
<dbReference type="KEGG" id="hsa:493829"/>
<dbReference type="MANE-Select" id="ENST00000322122.8">
    <property type="protein sequence ID" value="ENSP00000312675.3"/>
    <property type="RefSeq nucleotide sequence ID" value="NM_001008274.4"/>
    <property type="RefSeq protein sequence ID" value="NP_001008275.2"/>
</dbReference>
<dbReference type="UCSC" id="uc002ebn.3">
    <molecule id="Q6ZMU5-1"/>
    <property type="organism name" value="human"/>
</dbReference>
<dbReference type="AGR" id="HGNC:32671"/>
<dbReference type="CTD" id="493829"/>
<dbReference type="DisGeNET" id="493829"/>
<dbReference type="GeneCards" id="TRIM72"/>
<dbReference type="HGNC" id="HGNC:32671">
    <property type="gene designation" value="TRIM72"/>
</dbReference>
<dbReference type="HPA" id="ENSG00000177238">
    <property type="expression patterns" value="Group enriched (skeletal muscle, tongue)"/>
</dbReference>
<dbReference type="MIM" id="613288">
    <property type="type" value="gene"/>
</dbReference>
<dbReference type="neXtProt" id="NX_Q6ZMU5"/>
<dbReference type="OpenTargets" id="ENSG00000177238"/>
<dbReference type="PharmGKB" id="PA144596247"/>
<dbReference type="VEuPathDB" id="HostDB:ENSG00000177238"/>
<dbReference type="eggNOG" id="KOG2177">
    <property type="taxonomic scope" value="Eukaryota"/>
</dbReference>
<dbReference type="GeneTree" id="ENSGT00940000161791"/>
<dbReference type="HOGENOM" id="CLU_013137_0_3_1"/>
<dbReference type="InParanoid" id="Q6ZMU5"/>
<dbReference type="OMA" id="RLIQGMH"/>
<dbReference type="OrthoDB" id="6105938at2759"/>
<dbReference type="PAN-GO" id="Q6ZMU5">
    <property type="GO annotations" value="5 GO annotations based on evolutionary models"/>
</dbReference>
<dbReference type="PhylomeDB" id="Q6ZMU5"/>
<dbReference type="TreeFam" id="TF342569"/>
<dbReference type="PathwayCommons" id="Q6ZMU5"/>
<dbReference type="Reactome" id="R-HSA-445355">
    <property type="pathway name" value="Smooth Muscle Contraction"/>
</dbReference>
<dbReference type="SignaLink" id="Q6ZMU5"/>
<dbReference type="SIGNOR" id="Q6ZMU5"/>
<dbReference type="UniPathway" id="UPA00143"/>
<dbReference type="BioGRID-ORCS" id="493829">
    <property type="hits" value="26 hits in 1183 CRISPR screens"/>
</dbReference>
<dbReference type="ChiTaRS" id="TRIM72">
    <property type="organism name" value="human"/>
</dbReference>
<dbReference type="EvolutionaryTrace" id="Q6ZMU5"/>
<dbReference type="GenomeRNAi" id="493829"/>
<dbReference type="Pharos" id="Q6ZMU5">
    <property type="development level" value="Tbio"/>
</dbReference>
<dbReference type="PRO" id="PR:Q6ZMU5"/>
<dbReference type="Proteomes" id="UP000005640">
    <property type="component" value="Chromosome 16"/>
</dbReference>
<dbReference type="RNAct" id="Q6ZMU5">
    <property type="molecule type" value="protein"/>
</dbReference>
<dbReference type="Bgee" id="ENSG00000177238">
    <property type="expression patterns" value="Expressed in hindlimb stylopod muscle and 111 other cell types or tissues"/>
</dbReference>
<dbReference type="GO" id="GO:0005737">
    <property type="term" value="C:cytoplasm"/>
    <property type="evidence" value="ECO:0000318"/>
    <property type="project" value="GO_Central"/>
</dbReference>
<dbReference type="GO" id="GO:0030659">
    <property type="term" value="C:cytoplasmic vesicle membrane"/>
    <property type="evidence" value="ECO:0000250"/>
    <property type="project" value="UniProtKB"/>
</dbReference>
<dbReference type="GO" id="GO:0042383">
    <property type="term" value="C:sarcolemma"/>
    <property type="evidence" value="ECO:0000250"/>
    <property type="project" value="UniProtKB"/>
</dbReference>
<dbReference type="GO" id="GO:0042802">
    <property type="term" value="F:identical protein binding"/>
    <property type="evidence" value="ECO:0000353"/>
    <property type="project" value="IntAct"/>
</dbReference>
<dbReference type="GO" id="GO:0031435">
    <property type="term" value="F:mitogen-activated protein kinase kinase kinase binding"/>
    <property type="evidence" value="ECO:0007669"/>
    <property type="project" value="Ensembl"/>
</dbReference>
<dbReference type="GO" id="GO:0001786">
    <property type="term" value="F:phosphatidylserine binding"/>
    <property type="evidence" value="ECO:0000250"/>
    <property type="project" value="UniProtKB"/>
</dbReference>
<dbReference type="GO" id="GO:0031624">
    <property type="term" value="F:ubiquitin conjugating enzyme binding"/>
    <property type="evidence" value="ECO:0007669"/>
    <property type="project" value="Ensembl"/>
</dbReference>
<dbReference type="GO" id="GO:0061630">
    <property type="term" value="F:ubiquitin protein ligase activity"/>
    <property type="evidence" value="ECO:0000318"/>
    <property type="project" value="GO_Central"/>
</dbReference>
<dbReference type="GO" id="GO:0008270">
    <property type="term" value="F:zinc ion binding"/>
    <property type="evidence" value="ECO:0007669"/>
    <property type="project" value="UniProtKB-KW"/>
</dbReference>
<dbReference type="GO" id="GO:0006887">
    <property type="term" value="P:exocytosis"/>
    <property type="evidence" value="ECO:0007669"/>
    <property type="project" value="UniProtKB-KW"/>
</dbReference>
<dbReference type="GO" id="GO:0045087">
    <property type="term" value="P:innate immune response"/>
    <property type="evidence" value="ECO:0000318"/>
    <property type="project" value="GO_Central"/>
</dbReference>
<dbReference type="GO" id="GO:0007517">
    <property type="term" value="P:muscle organ development"/>
    <property type="evidence" value="ECO:0000250"/>
    <property type="project" value="UniProtKB"/>
</dbReference>
<dbReference type="GO" id="GO:0003012">
    <property type="term" value="P:muscle system process"/>
    <property type="evidence" value="ECO:0000250"/>
    <property type="project" value="UniProtKB"/>
</dbReference>
<dbReference type="GO" id="GO:0046627">
    <property type="term" value="P:negative regulation of insulin receptor signaling pathway"/>
    <property type="evidence" value="ECO:0007669"/>
    <property type="project" value="Ensembl"/>
</dbReference>
<dbReference type="GO" id="GO:0043569">
    <property type="term" value="P:negative regulation of insulin-like growth factor receptor signaling pathway"/>
    <property type="evidence" value="ECO:0007669"/>
    <property type="project" value="Ensembl"/>
</dbReference>
<dbReference type="GO" id="GO:0010832">
    <property type="term" value="P:negative regulation of myotube differentiation"/>
    <property type="evidence" value="ECO:0007669"/>
    <property type="project" value="Ensembl"/>
</dbReference>
<dbReference type="GO" id="GO:0001778">
    <property type="term" value="P:plasma membrane repair"/>
    <property type="evidence" value="ECO:0000250"/>
    <property type="project" value="UniProtKB"/>
</dbReference>
<dbReference type="GO" id="GO:0043161">
    <property type="term" value="P:proteasome-mediated ubiquitin-dependent protein catabolic process"/>
    <property type="evidence" value="ECO:0000318"/>
    <property type="project" value="GO_Central"/>
</dbReference>
<dbReference type="GO" id="GO:0051260">
    <property type="term" value="P:protein homooligomerization"/>
    <property type="evidence" value="ECO:0000250"/>
    <property type="project" value="UniProtKB"/>
</dbReference>
<dbReference type="CDD" id="cd13742">
    <property type="entry name" value="SPRY_PRY_TRIM72"/>
    <property type="match status" value="1"/>
</dbReference>
<dbReference type="FunFam" id="2.60.120.920:FF:000027">
    <property type="entry name" value="E3 ubiquitin-protein ligase TRIM50"/>
    <property type="match status" value="1"/>
</dbReference>
<dbReference type="FunFam" id="3.30.160.60:FF:001654">
    <property type="entry name" value="Tripartite motif-containing protein 72"/>
    <property type="match status" value="1"/>
</dbReference>
<dbReference type="FunFam" id="3.30.40.10:FF:000487">
    <property type="entry name" value="tripartite motif-containing protein 72"/>
    <property type="match status" value="1"/>
</dbReference>
<dbReference type="Gene3D" id="2.60.120.920">
    <property type="match status" value="1"/>
</dbReference>
<dbReference type="Gene3D" id="3.30.160.60">
    <property type="entry name" value="Classic Zinc Finger"/>
    <property type="match status" value="1"/>
</dbReference>
<dbReference type="Gene3D" id="3.30.40.10">
    <property type="entry name" value="Zinc/RING finger domain, C3HC4 (zinc finger)"/>
    <property type="match status" value="1"/>
</dbReference>
<dbReference type="InterPro" id="IPR001870">
    <property type="entry name" value="B30.2/SPRY"/>
</dbReference>
<dbReference type="InterPro" id="IPR043136">
    <property type="entry name" value="B30.2/SPRY_sf"/>
</dbReference>
<dbReference type="InterPro" id="IPR003879">
    <property type="entry name" value="Butyrophylin_SPRY"/>
</dbReference>
<dbReference type="InterPro" id="IPR013320">
    <property type="entry name" value="ConA-like_dom_sf"/>
</dbReference>
<dbReference type="InterPro" id="IPR006574">
    <property type="entry name" value="PRY"/>
</dbReference>
<dbReference type="InterPro" id="IPR003877">
    <property type="entry name" value="SPRY_dom"/>
</dbReference>
<dbReference type="InterPro" id="IPR050143">
    <property type="entry name" value="TRIM/RBCC"/>
</dbReference>
<dbReference type="InterPro" id="IPR000315">
    <property type="entry name" value="Znf_B-box"/>
</dbReference>
<dbReference type="InterPro" id="IPR001841">
    <property type="entry name" value="Znf_RING"/>
</dbReference>
<dbReference type="InterPro" id="IPR013083">
    <property type="entry name" value="Znf_RING/FYVE/PHD"/>
</dbReference>
<dbReference type="InterPro" id="IPR017907">
    <property type="entry name" value="Znf_RING_CS"/>
</dbReference>
<dbReference type="PANTHER" id="PTHR24103">
    <property type="entry name" value="E3 UBIQUITIN-PROTEIN LIGASE TRIM"/>
    <property type="match status" value="1"/>
</dbReference>
<dbReference type="Pfam" id="PF13765">
    <property type="entry name" value="PRY"/>
    <property type="match status" value="1"/>
</dbReference>
<dbReference type="Pfam" id="PF00622">
    <property type="entry name" value="SPRY"/>
    <property type="match status" value="1"/>
</dbReference>
<dbReference type="Pfam" id="PF00643">
    <property type="entry name" value="zf-B_box"/>
    <property type="match status" value="1"/>
</dbReference>
<dbReference type="Pfam" id="PF15227">
    <property type="entry name" value="zf-C3HC4_4"/>
    <property type="match status" value="1"/>
</dbReference>
<dbReference type="PRINTS" id="PR01407">
    <property type="entry name" value="BUTYPHLNCDUF"/>
</dbReference>
<dbReference type="SMART" id="SM00336">
    <property type="entry name" value="BBOX"/>
    <property type="match status" value="1"/>
</dbReference>
<dbReference type="SMART" id="SM00589">
    <property type="entry name" value="PRY"/>
    <property type="match status" value="1"/>
</dbReference>
<dbReference type="SMART" id="SM00184">
    <property type="entry name" value="RING"/>
    <property type="match status" value="1"/>
</dbReference>
<dbReference type="SMART" id="SM00449">
    <property type="entry name" value="SPRY"/>
    <property type="match status" value="1"/>
</dbReference>
<dbReference type="SUPFAM" id="SSF57845">
    <property type="entry name" value="B-box zinc-binding domain"/>
    <property type="match status" value="1"/>
</dbReference>
<dbReference type="SUPFAM" id="SSF49899">
    <property type="entry name" value="Concanavalin A-like lectins/glucanases"/>
    <property type="match status" value="1"/>
</dbReference>
<dbReference type="SUPFAM" id="SSF57850">
    <property type="entry name" value="RING/U-box"/>
    <property type="match status" value="1"/>
</dbReference>
<dbReference type="PROSITE" id="PS50188">
    <property type="entry name" value="B302_SPRY"/>
    <property type="match status" value="1"/>
</dbReference>
<dbReference type="PROSITE" id="PS50119">
    <property type="entry name" value="ZF_BBOX"/>
    <property type="match status" value="1"/>
</dbReference>
<dbReference type="PROSITE" id="PS00518">
    <property type="entry name" value="ZF_RING_1"/>
    <property type="match status" value="1"/>
</dbReference>
<dbReference type="PROSITE" id="PS50089">
    <property type="entry name" value="ZF_RING_2"/>
    <property type="match status" value="1"/>
</dbReference>
<proteinExistence type="evidence at protein level"/>
<organism>
    <name type="scientific">Homo sapiens</name>
    <name type="common">Human</name>
    <dbReference type="NCBI Taxonomy" id="9606"/>
    <lineage>
        <taxon>Eukaryota</taxon>
        <taxon>Metazoa</taxon>
        <taxon>Chordata</taxon>
        <taxon>Craniata</taxon>
        <taxon>Vertebrata</taxon>
        <taxon>Euteleostomi</taxon>
        <taxon>Mammalia</taxon>
        <taxon>Eutheria</taxon>
        <taxon>Euarchontoglires</taxon>
        <taxon>Primates</taxon>
        <taxon>Haplorrhini</taxon>
        <taxon>Catarrhini</taxon>
        <taxon>Hominidae</taxon>
        <taxon>Homo</taxon>
    </lineage>
</organism>
<evidence type="ECO:0000250" key="1"/>
<evidence type="ECO:0000250" key="2">
    <source>
        <dbReference type="UniProtKB" id="A0JPQ4"/>
    </source>
</evidence>
<evidence type="ECO:0000250" key="3">
    <source>
        <dbReference type="UniProtKB" id="Q1XH17"/>
    </source>
</evidence>
<evidence type="ECO:0000255" key="4"/>
<evidence type="ECO:0000255" key="5">
    <source>
        <dbReference type="PROSITE-ProRule" id="PRU00024"/>
    </source>
</evidence>
<evidence type="ECO:0000255" key="6">
    <source>
        <dbReference type="PROSITE-ProRule" id="PRU00175"/>
    </source>
</evidence>
<evidence type="ECO:0000255" key="7">
    <source>
        <dbReference type="PROSITE-ProRule" id="PRU00548"/>
    </source>
</evidence>
<evidence type="ECO:0000269" key="8">
    <source>
    </source>
</evidence>
<evidence type="ECO:0000269" key="9">
    <source>
    </source>
</evidence>
<evidence type="ECO:0000269" key="10">
    <source>
    </source>
</evidence>
<evidence type="ECO:0000269" key="11">
    <source>
    </source>
</evidence>
<evidence type="ECO:0000269" key="12">
    <source>
    </source>
</evidence>
<evidence type="ECO:0000269" key="13">
    <source>
    </source>
</evidence>
<evidence type="ECO:0000303" key="14">
    <source>
    </source>
</evidence>
<evidence type="ECO:0000303" key="15">
    <source>
    </source>
</evidence>
<evidence type="ECO:0000303" key="16">
    <source>
    </source>
</evidence>
<evidence type="ECO:0000305" key="17"/>
<evidence type="ECO:0000312" key="18">
    <source>
        <dbReference type="EMBL" id="AAH33211.1"/>
    </source>
</evidence>
<evidence type="ECO:0000312" key="19">
    <source>
        <dbReference type="EMBL" id="BAC03506.1"/>
    </source>
</evidence>
<evidence type="ECO:0000312" key="20">
    <source>
        <dbReference type="EMBL" id="BAD18630.1"/>
    </source>
</evidence>
<evidence type="ECO:0000312" key="21">
    <source>
        <dbReference type="HGNC" id="HGNC:32671"/>
    </source>
</evidence>
<evidence type="ECO:0007744" key="22">
    <source>
        <dbReference type="PDB" id="3KB5"/>
    </source>
</evidence>
<evidence type="ECO:0007744" key="23">
    <source>
        <dbReference type="PDB" id="7XT2"/>
    </source>
</evidence>
<evidence type="ECO:0007744" key="24">
    <source>
        <dbReference type="PDB" id="7Y4S"/>
    </source>
</evidence>
<evidence type="ECO:0007829" key="25">
    <source>
        <dbReference type="PDB" id="3KB5"/>
    </source>
</evidence>
<evidence type="ECO:0007829" key="26">
    <source>
        <dbReference type="PDB" id="7XT2"/>
    </source>
</evidence>
<evidence type="ECO:0007829" key="27">
    <source>
        <dbReference type="PDB" id="7Y4S"/>
    </source>
</evidence>
<comment type="function">
    <text evidence="3 12">Muscle-specific E3 ubiquitin-protein ligase that plays a central role in cell membrane repair by nucleating the assembly of the repair machinery at injury sites (PubMed:36944613). Its ubiquitination activity is mediated by E2 ubiquitin-conjugating enzymes UBE2D1, UBE2D2 and UBE2D3 (By similarity). Acts as a sensor of oxidation: upon membrane damage, entry of extracellular oxidative environment results in disulfide bond formation and homooligomerization at the injury site (By similarity). This oligomerization acts as a nucleation site for recruitment of TRIM72-containing vesicles to the injury site, leading to membrane patch formation (By similarity). Probably acts upstream of the Ca(2+)-dependent membrane resealing process (By similarity). Required for transport of DYSF to sites of cell injury during repair patch formation (By similarity). Regulates membrane budding and exocytosis (By similarity). May be involved in the regulation of the mobility of KCNB1-containing endocytic vesicles (By similarity).</text>
</comment>
<comment type="catalytic activity">
    <reaction evidence="12">
        <text>S-ubiquitinyl-[E2 ubiquitin-conjugating enzyme]-L-cysteine + [acceptor protein]-L-lysine = [E2 ubiquitin-conjugating enzyme]-L-cysteine + N(6)-ubiquitinyl-[acceptor protein]-L-lysine.</text>
        <dbReference type="EC" id="2.3.2.27"/>
    </reaction>
</comment>
<comment type="activity regulation">
    <text evidence="3 12">Specifically binds phosphatidylserine (PubMed:36944613). The binding to phospholipids enhances ubiquitination activity (By similarity).</text>
</comment>
<comment type="pathway">
    <text evidence="12">Protein modification; protein ubiquitination.</text>
</comment>
<comment type="subunit">
    <text evidence="3 11 12">Homodimer (PubMed:36053137, PubMed:36944613). Homooligomer; disulfide-linked (PubMed:36944613). Oligomerizes on the phospholipid membrane (By similarity). Interacts with DYSF and CAV3 (By similarity).</text>
</comment>
<comment type="interaction">
    <interactant intactId="EBI-2341648">
        <id>Q6ZMU5</id>
    </interactant>
    <interactant intactId="EBI-11096309">
        <id>Q9NYB9-2</id>
        <label>ABI2</label>
    </interactant>
    <organismsDiffer>false</organismsDiffer>
    <experiments>3</experiments>
</comment>
<comment type="interaction">
    <interactant intactId="EBI-2341648">
        <id>Q6ZMU5</id>
    </interactant>
    <interactant intactId="EBI-747505">
        <id>Q8TAB5</id>
        <label>C1orf216</label>
    </interactant>
    <organismsDiffer>false</organismsDiffer>
    <experiments>3</experiments>
</comment>
<comment type="interaction">
    <interactant intactId="EBI-2341648">
        <id>Q6ZMU5</id>
    </interactant>
    <interactant intactId="EBI-394678">
        <id>Q13503</id>
        <label>MED21</label>
    </interactant>
    <organismsDiffer>false</organismsDiffer>
    <experiments>3</experiments>
</comment>
<comment type="interaction">
    <interactant intactId="EBI-2341648">
        <id>Q6ZMU5</id>
    </interactant>
    <interactant intactId="EBI-2637198">
        <id>Q08AG7</id>
        <label>MZT1</label>
    </interactant>
    <organismsDiffer>false</organismsDiffer>
    <experiments>3</experiments>
</comment>
<comment type="interaction">
    <interactant intactId="EBI-2341648">
        <id>Q6ZMU5</id>
    </interactant>
    <interactant intactId="EBI-372942">
        <id>Q13287</id>
        <label>NMI</label>
    </interactant>
    <organismsDiffer>false</organismsDiffer>
    <experiments>3</experiments>
</comment>
<comment type="interaction">
    <interactant intactId="EBI-2341648">
        <id>Q6ZMU5</id>
    </interactant>
    <interactant intactId="EBI-11959013">
        <id>Q08209-2</id>
        <label>PPP3CA</label>
    </interactant>
    <organismsDiffer>false</organismsDiffer>
    <experiments>3</experiments>
</comment>
<comment type="interaction">
    <interactant intactId="EBI-2341648">
        <id>Q6ZMU5</id>
    </interactant>
    <interactant intactId="EBI-358489">
        <id>Q96GM5</id>
        <label>SMARCD1</label>
    </interactant>
    <organismsDiffer>false</organismsDiffer>
    <experiments>3</experiments>
</comment>
<comment type="interaction">
    <interactant intactId="EBI-2341648">
        <id>Q6ZMU5</id>
    </interactant>
    <interactant intactId="EBI-722877">
        <id>Q99081</id>
        <label>TCF12</label>
    </interactant>
    <organismsDiffer>false</organismsDiffer>
    <experiments>3</experiments>
</comment>
<comment type="interaction">
    <interactant intactId="EBI-2341648">
        <id>Q6ZMU5</id>
    </interactant>
    <interactant intactId="EBI-11952764">
        <id>Q99081-3</id>
        <label>TCF12</label>
    </interactant>
    <organismsDiffer>false</organismsDiffer>
    <experiments>3</experiments>
</comment>
<comment type="interaction">
    <interactant intactId="EBI-2341648">
        <id>Q6ZMU5</id>
    </interactant>
    <interactant intactId="EBI-2341648">
        <id>Q6ZMU5</id>
        <label>TRIM72</label>
    </interactant>
    <organismsDiffer>false</organismsDiffer>
    <experiments>3</experiments>
</comment>
<comment type="interaction">
    <interactant intactId="EBI-2341648">
        <id>Q6ZMU5</id>
    </interactant>
    <interactant intactId="EBI-625509">
        <id>Q8N720</id>
        <label>ZNF655</label>
    </interactant>
    <organismsDiffer>false</organismsDiffer>
    <experiments>3</experiments>
</comment>
<comment type="subcellular location">
    <subcellularLocation>
        <location evidence="12">Cell membrane</location>
        <location evidence="12">Sarcolemma</location>
    </subcellularLocation>
    <subcellularLocation>
        <location evidence="12 13">Cytoplasmic vesicle membrane</location>
    </subcellularLocation>
    <text evidence="1 12 13">Tethered to plasma membrane and cytoplasmic vesicles via its interaction with phosphatidylserine.</text>
</comment>
<comment type="alternative products">
    <event type="alternative splicing"/>
    <isoform>
        <id>Q6ZMU5-1</id>
        <name evidence="8">1</name>
        <sequence type="displayed"/>
    </isoform>
    <isoform>
        <id>Q6ZMU5-2</id>
        <name evidence="9">2</name>
        <sequence type="described" ref="VSP_052318"/>
    </isoform>
</comment>
<comment type="domain">
    <text evidence="3">The RING domain is flexible in both the dimer and oligomer (By similarity). Binding to the negatively charged phosphatidylserine lipids is mediated by the positively charged PRYSPRY domains and is inhibited by Ca(2+) (By similarity).</text>
</comment>
<comment type="PTM">
    <text evidence="1">Disulfide bond formation at Cys-242 occurs in case of membrane damage that cause the entry of the oxidized milieu of the extracellular space, resulting in homooligomerization.</text>
</comment>
<comment type="PTM">
    <text evidence="10">S-nitrosylation at Cys-144 stabilizes TRIM72 and protects against oxidation-induced protein degradation and cell death.</text>
</comment>
<comment type="similarity">
    <text evidence="4">Belongs to the TRIM/RBCC family.</text>
</comment>
<comment type="sequence caution" evidence="17">
    <conflict type="erroneous initiation">
        <sequence resource="EMBL-CDS" id="BAC03506"/>
    </conflict>
</comment>
<keyword id="KW-0002">3D-structure</keyword>
<keyword id="KW-0025">Alternative splicing</keyword>
<keyword id="KW-1003">Cell membrane</keyword>
<keyword id="KW-0175">Coiled coil</keyword>
<keyword id="KW-0968">Cytoplasmic vesicle</keyword>
<keyword id="KW-1015">Disulfide bond</keyword>
<keyword id="KW-0268">Exocytosis</keyword>
<keyword id="KW-0472">Membrane</keyword>
<keyword id="KW-0479">Metal-binding</keyword>
<keyword id="KW-0597">Phosphoprotein</keyword>
<keyword id="KW-1267">Proteomics identification</keyword>
<keyword id="KW-1185">Reference proteome</keyword>
<keyword id="KW-0702">S-nitrosylation</keyword>
<keyword id="KW-0808">Transferase</keyword>
<keyword id="KW-0813">Transport</keyword>
<keyword id="KW-0833">Ubl conjugation pathway</keyword>
<keyword id="KW-0862">Zinc</keyword>
<keyword id="KW-0863">Zinc-finger</keyword>
<gene>
    <name evidence="21" type="primary">TRIM72</name>
    <name type="synonym">MG53</name>
</gene>
<sequence length="477" mass="52731">MSAAPGLLHQELSCPLCLQLFDAPVTAECGHSFCRACLGRVAGEPAADGTVLCPCCQAPTRPQALSTNLQLARLVEGLAQVPQGHCEEHLDPLSIYCEQDRALVCGVCASLGSHRGHRLLPAAEAHARLKTQLPQQKLQLQEACMRKEKSVAVLEHQLVEVEETVRQFRGAVGEQLGKMRVFLAALEGSLDREAERVRGEAGVALRRELGSLNSYLEQLRQMEKVLEEVADKPQTEFLMKYCLVTSRLQKILAESPPPARLDIQLPIISDDFKFQVWRKMFRALMPALEELTFDPSSAHPSLVVSSSGRRVECSEQKAPPAGEDPRQFDKAVAVVAHQQLSEGEHYWEVDVGDKPRWALGVIAAEAPRRGRLHAVPSQGLWLLGLREGKILEAHVEAKEPRALRSPERRPTRIGLYLSFGDGVLSFYDASDADALVPLFAFHERLPRPVYPFFDVCWHDKGKNAQPLLLVGPEGAEA</sequence>
<reference evidence="17 20" key="1">
    <citation type="journal article" date="2004" name="Nat. Genet.">
        <title>Complete sequencing and characterization of 21,243 full-length human cDNAs.</title>
        <authorList>
            <person name="Ota T."/>
            <person name="Suzuki Y."/>
            <person name="Nishikawa T."/>
            <person name="Otsuki T."/>
            <person name="Sugiyama T."/>
            <person name="Irie R."/>
            <person name="Wakamatsu A."/>
            <person name="Hayashi K."/>
            <person name="Sato H."/>
            <person name="Nagai K."/>
            <person name="Kimura K."/>
            <person name="Makita H."/>
            <person name="Sekine M."/>
            <person name="Obayashi M."/>
            <person name="Nishi T."/>
            <person name="Shibahara T."/>
            <person name="Tanaka T."/>
            <person name="Ishii S."/>
            <person name="Yamamoto J."/>
            <person name="Saito K."/>
            <person name="Kawai Y."/>
            <person name="Isono Y."/>
            <person name="Nakamura Y."/>
            <person name="Nagahari K."/>
            <person name="Murakami K."/>
            <person name="Yasuda T."/>
            <person name="Iwayanagi T."/>
            <person name="Wagatsuma M."/>
            <person name="Shiratori A."/>
            <person name="Sudo H."/>
            <person name="Hosoiri T."/>
            <person name="Kaku Y."/>
            <person name="Kodaira H."/>
            <person name="Kondo H."/>
            <person name="Sugawara M."/>
            <person name="Takahashi M."/>
            <person name="Kanda K."/>
            <person name="Yokoi T."/>
            <person name="Furuya T."/>
            <person name="Kikkawa E."/>
            <person name="Omura Y."/>
            <person name="Abe K."/>
            <person name="Kamihara K."/>
            <person name="Katsuta N."/>
            <person name="Sato K."/>
            <person name="Tanikawa M."/>
            <person name="Yamazaki M."/>
            <person name="Ninomiya K."/>
            <person name="Ishibashi T."/>
            <person name="Yamashita H."/>
            <person name="Murakawa K."/>
            <person name="Fujimori K."/>
            <person name="Tanai H."/>
            <person name="Kimata M."/>
            <person name="Watanabe M."/>
            <person name="Hiraoka S."/>
            <person name="Chiba Y."/>
            <person name="Ishida S."/>
            <person name="Ono Y."/>
            <person name="Takiguchi S."/>
            <person name="Watanabe S."/>
            <person name="Yosida M."/>
            <person name="Hotuta T."/>
            <person name="Kusano J."/>
            <person name="Kanehori K."/>
            <person name="Takahashi-Fujii A."/>
            <person name="Hara H."/>
            <person name="Tanase T.-O."/>
            <person name="Nomura Y."/>
            <person name="Togiya S."/>
            <person name="Komai F."/>
            <person name="Hara R."/>
            <person name="Takeuchi K."/>
            <person name="Arita M."/>
            <person name="Imose N."/>
            <person name="Musashino K."/>
            <person name="Yuuki H."/>
            <person name="Oshima A."/>
            <person name="Sasaki N."/>
            <person name="Aotsuka S."/>
            <person name="Yoshikawa Y."/>
            <person name="Matsunawa H."/>
            <person name="Ichihara T."/>
            <person name="Shiohata N."/>
            <person name="Sano S."/>
            <person name="Moriya S."/>
            <person name="Momiyama H."/>
            <person name="Satoh N."/>
            <person name="Takami S."/>
            <person name="Terashima Y."/>
            <person name="Suzuki O."/>
            <person name="Nakagawa S."/>
            <person name="Senoh A."/>
            <person name="Mizoguchi H."/>
            <person name="Goto Y."/>
            <person name="Shimizu F."/>
            <person name="Wakebe H."/>
            <person name="Hishigaki H."/>
            <person name="Watanabe T."/>
            <person name="Sugiyama A."/>
            <person name="Takemoto M."/>
            <person name="Kawakami B."/>
            <person name="Yamazaki M."/>
            <person name="Watanabe K."/>
            <person name="Kumagai A."/>
            <person name="Itakura S."/>
            <person name="Fukuzumi Y."/>
            <person name="Fujimori Y."/>
            <person name="Komiyama M."/>
            <person name="Tashiro H."/>
            <person name="Tanigami A."/>
            <person name="Fujiwara T."/>
            <person name="Ono T."/>
            <person name="Yamada K."/>
            <person name="Fujii Y."/>
            <person name="Ozaki K."/>
            <person name="Hirao M."/>
            <person name="Ohmori Y."/>
            <person name="Kawabata A."/>
            <person name="Hikiji T."/>
            <person name="Kobatake N."/>
            <person name="Inagaki H."/>
            <person name="Ikema Y."/>
            <person name="Okamoto S."/>
            <person name="Okitani R."/>
            <person name="Kawakami T."/>
            <person name="Noguchi S."/>
            <person name="Itoh T."/>
            <person name="Shigeta K."/>
            <person name="Senba T."/>
            <person name="Matsumura K."/>
            <person name="Nakajima Y."/>
            <person name="Mizuno T."/>
            <person name="Morinaga M."/>
            <person name="Sasaki M."/>
            <person name="Togashi T."/>
            <person name="Oyama M."/>
            <person name="Hata H."/>
            <person name="Watanabe M."/>
            <person name="Komatsu T."/>
            <person name="Mizushima-Sugano J."/>
            <person name="Satoh T."/>
            <person name="Shirai Y."/>
            <person name="Takahashi Y."/>
            <person name="Nakagawa K."/>
            <person name="Okumura K."/>
            <person name="Nagase T."/>
            <person name="Nomura N."/>
            <person name="Kikuchi H."/>
            <person name="Masuho Y."/>
            <person name="Yamashita R."/>
            <person name="Nakai K."/>
            <person name="Yada T."/>
            <person name="Nakamura Y."/>
            <person name="Ohara O."/>
            <person name="Isogai T."/>
            <person name="Sugano S."/>
        </authorList>
    </citation>
    <scope>NUCLEOTIDE SEQUENCE [LARGE SCALE MRNA] (ISOFORM 1)</scope>
    <source>
        <tissue evidence="19">Cerebellum</tissue>
        <tissue evidence="20">Thymus</tissue>
    </source>
</reference>
<reference evidence="17" key="2">
    <citation type="journal article" date="2004" name="Nature">
        <title>The sequence and analysis of duplication-rich human chromosome 16.</title>
        <authorList>
            <person name="Martin J."/>
            <person name="Han C."/>
            <person name="Gordon L.A."/>
            <person name="Terry A."/>
            <person name="Prabhakar S."/>
            <person name="She X."/>
            <person name="Xie G."/>
            <person name="Hellsten U."/>
            <person name="Chan Y.M."/>
            <person name="Altherr M."/>
            <person name="Couronne O."/>
            <person name="Aerts A."/>
            <person name="Bajorek E."/>
            <person name="Black S."/>
            <person name="Blumer H."/>
            <person name="Branscomb E."/>
            <person name="Brown N.C."/>
            <person name="Bruno W.J."/>
            <person name="Buckingham J.M."/>
            <person name="Callen D.F."/>
            <person name="Campbell C.S."/>
            <person name="Campbell M.L."/>
            <person name="Campbell E.W."/>
            <person name="Caoile C."/>
            <person name="Challacombe J.F."/>
            <person name="Chasteen L.A."/>
            <person name="Chertkov O."/>
            <person name="Chi H.C."/>
            <person name="Christensen M."/>
            <person name="Clark L.M."/>
            <person name="Cohn J.D."/>
            <person name="Denys M."/>
            <person name="Detter J.C."/>
            <person name="Dickson M."/>
            <person name="Dimitrijevic-Bussod M."/>
            <person name="Escobar J."/>
            <person name="Fawcett J.J."/>
            <person name="Flowers D."/>
            <person name="Fotopulos D."/>
            <person name="Glavina T."/>
            <person name="Gomez M."/>
            <person name="Gonzales E."/>
            <person name="Goodstein D."/>
            <person name="Goodwin L.A."/>
            <person name="Grady D.L."/>
            <person name="Grigoriev I."/>
            <person name="Groza M."/>
            <person name="Hammon N."/>
            <person name="Hawkins T."/>
            <person name="Haydu L."/>
            <person name="Hildebrand C.E."/>
            <person name="Huang W."/>
            <person name="Israni S."/>
            <person name="Jett J."/>
            <person name="Jewett P.B."/>
            <person name="Kadner K."/>
            <person name="Kimball H."/>
            <person name="Kobayashi A."/>
            <person name="Krawczyk M.-C."/>
            <person name="Leyba T."/>
            <person name="Longmire J.L."/>
            <person name="Lopez F."/>
            <person name="Lou Y."/>
            <person name="Lowry S."/>
            <person name="Ludeman T."/>
            <person name="Manohar C.F."/>
            <person name="Mark G.A."/>
            <person name="McMurray K.L."/>
            <person name="Meincke L.J."/>
            <person name="Morgan J."/>
            <person name="Moyzis R.K."/>
            <person name="Mundt M.O."/>
            <person name="Munk A.C."/>
            <person name="Nandkeshwar R.D."/>
            <person name="Pitluck S."/>
            <person name="Pollard M."/>
            <person name="Predki P."/>
            <person name="Parson-Quintana B."/>
            <person name="Ramirez L."/>
            <person name="Rash S."/>
            <person name="Retterer J."/>
            <person name="Ricke D.O."/>
            <person name="Robinson D.L."/>
            <person name="Rodriguez A."/>
            <person name="Salamov A."/>
            <person name="Saunders E.H."/>
            <person name="Scott D."/>
            <person name="Shough T."/>
            <person name="Stallings R.L."/>
            <person name="Stalvey M."/>
            <person name="Sutherland R.D."/>
            <person name="Tapia R."/>
            <person name="Tesmer J.G."/>
            <person name="Thayer N."/>
            <person name="Thompson L.S."/>
            <person name="Tice H."/>
            <person name="Torney D.C."/>
            <person name="Tran-Gyamfi M."/>
            <person name="Tsai M."/>
            <person name="Ulanovsky L.E."/>
            <person name="Ustaszewska A."/>
            <person name="Vo N."/>
            <person name="White P.S."/>
            <person name="Williams A.L."/>
            <person name="Wills P.L."/>
            <person name="Wu J.-R."/>
            <person name="Wu K."/>
            <person name="Yang J."/>
            <person name="DeJong P."/>
            <person name="Bruce D."/>
            <person name="Doggett N.A."/>
            <person name="Deaven L."/>
            <person name="Schmutz J."/>
            <person name="Grimwood J."/>
            <person name="Richardson P."/>
            <person name="Rokhsar D.S."/>
            <person name="Eichler E.E."/>
            <person name="Gilna P."/>
            <person name="Lucas S.M."/>
            <person name="Myers R.M."/>
            <person name="Rubin E.M."/>
            <person name="Pennacchio L.A."/>
        </authorList>
    </citation>
    <scope>NUCLEOTIDE SEQUENCE [LARGE SCALE GENOMIC DNA]</scope>
</reference>
<reference evidence="17 18" key="3">
    <citation type="journal article" date="2004" name="Genome Res.">
        <title>The status, quality, and expansion of the NIH full-length cDNA project: the Mammalian Gene Collection (MGC).</title>
        <authorList>
            <consortium name="The MGC Project Team"/>
        </authorList>
    </citation>
    <scope>NUCLEOTIDE SEQUENCE [LARGE SCALE MRNA] (ISOFORM 2)</scope>
    <source>
        <tissue evidence="18">Muscle</tissue>
    </source>
</reference>
<reference key="4">
    <citation type="journal article" date="2014" name="J. Mol. Cell. Cardiol.">
        <title>S-nitrosylation of TRIM72 at cysteine 144 is critical for protection against oxidation-induced protein degradation and cell death.</title>
        <authorList>
            <person name="Kohr M.J."/>
            <person name="Evangelista A.M."/>
            <person name="Ferlito M."/>
            <person name="Steenbergen C."/>
            <person name="Murphy E."/>
        </authorList>
    </citation>
    <scope>S-NITROSYLATION AT CYS-144</scope>
    <scope>MUTAGENESIS OF CYS-144</scope>
</reference>
<reference key="5">
    <citation type="journal article" date="2023" name="Nat. Struct. Mol. Biol.">
        <title>Structure and activation of the RING E3 ubiquitin ligase TRIM72 on the membrane.</title>
        <authorList>
            <person name="Park S.H."/>
            <person name="Han J."/>
            <person name="Jeong B.C."/>
            <person name="Song J.H."/>
            <person name="Jang S.H."/>
            <person name="Jeong H."/>
            <person name="Kim B.H."/>
            <person name="Ko Y.G."/>
            <person name="Park Z.Y."/>
            <person name="Lee K.E."/>
            <person name="Hyun J."/>
            <person name="Song H.K."/>
        </authorList>
    </citation>
    <scope>SUBCELLULAR LOCATION</scope>
    <scope>MUTAGENESIS OF 272-PHE--PHE-281; 368-ARG--ARG-371 AND 460-LYS--LYS-462</scope>
</reference>
<reference evidence="22" key="6">
    <citation type="journal article" date="2010" name="Proteins">
        <title>Crystal structure of PRY-SPRY domain of human TRIM72.</title>
        <authorList>
            <person name="Park E.Y."/>
            <person name="Kwon O.B."/>
            <person name="Jeong B.C."/>
            <person name="Yi J.S."/>
            <person name="Lee C.S."/>
            <person name="Ko Y.G."/>
            <person name="Song H.K."/>
        </authorList>
    </citation>
    <scope>X-RAY CRYSTALLOGRAPHY (1.5 ANGSTROMS) OF 278-470</scope>
</reference>
<reference evidence="24" key="7">
    <citation type="journal article" date="2022" name="Biochem. J.">
        <title>Cryo-EM structure of human MG53 homodimer.</title>
        <authorList>
            <person name="Niu Y."/>
            <person name="Chen G."/>
            <person name="Lv F."/>
            <person name="Xiao R.P."/>
            <person name="Hu X."/>
            <person name="Chen L."/>
        </authorList>
    </citation>
    <scope>STRUCTURE BY ELECTRON MICROSCOPY (3.50 ANGSTROMS)</scope>
    <scope>SUBUNIT</scope>
</reference>
<reference evidence="23" key="8">
    <citation type="journal article" date="2023" name="Nat. Commun.">
        <title>Structural basis for TRIM72 oligomerization during membrane damage repair.</title>
        <authorList>
            <person name="Ma Y."/>
            <person name="Ding L."/>
            <person name="Li Z."/>
            <person name="Zhou C."/>
        </authorList>
    </citation>
    <scope>X-RAY CRYSTALLOGRAPHY (3.00 ANGSTROMS) IN COMPLEX WITH ZN(2+)</scope>
    <scope>FUNCTION</scope>
    <scope>CATALYTIC ACTIVITY</scope>
    <scope>PATHWAY</scope>
    <scope>SUBUNIT</scope>
    <scope>SUBCELLULAR LOCATION</scope>
    <scope>MUTAGENESIS OF ILE-95; ARG-169; LEU-176; MET-179; ARG-180; LEU-183; LEU-186; LEU-190; ARG-198; ARG-220; CYS-242; PHE-272; TRP-277; LYS-279 AND ASP-433</scope>
</reference>
<feature type="chain" id="PRO_0000278130" description="Tripartite motif-containing protein 72">
    <location>
        <begin position="1"/>
        <end position="477"/>
    </location>
</feature>
<feature type="domain" description="B30.2/SPRY" evidence="7">
    <location>
        <begin position="271"/>
        <end position="475"/>
    </location>
</feature>
<feature type="zinc finger region" description="RING-type" evidence="6">
    <location>
        <begin position="14"/>
        <end position="57"/>
    </location>
</feature>
<feature type="zinc finger region" description="B box-type" evidence="5">
    <location>
        <begin position="81"/>
        <end position="122"/>
    </location>
</feature>
<feature type="coiled-coil region" evidence="4 23 24">
    <location>
        <begin position="135"/>
        <end position="232"/>
    </location>
</feature>
<feature type="binding site" evidence="3">
    <location>
        <position position="14"/>
    </location>
    <ligand>
        <name>Zn(2+)</name>
        <dbReference type="ChEBI" id="CHEBI:29105"/>
        <label>1</label>
        <note>structural for RING</note>
    </ligand>
</feature>
<feature type="binding site" evidence="3">
    <location>
        <position position="17"/>
    </location>
    <ligand>
        <name>Zn(2+)</name>
        <dbReference type="ChEBI" id="CHEBI:29105"/>
        <label>1</label>
        <note>structural for RING</note>
    </ligand>
</feature>
<feature type="binding site" evidence="3">
    <location>
        <position position="29"/>
    </location>
    <ligand>
        <name>Zn(2+)</name>
        <dbReference type="ChEBI" id="CHEBI:29105"/>
        <label>2</label>
        <note>structural for RING</note>
    </ligand>
</feature>
<feature type="binding site" evidence="3">
    <location>
        <position position="31"/>
    </location>
    <ligand>
        <name>Zn(2+)</name>
        <dbReference type="ChEBI" id="CHEBI:29105"/>
        <label>2</label>
        <note>structural for RING</note>
    </ligand>
</feature>
<feature type="binding site" evidence="3">
    <location>
        <position position="34"/>
    </location>
    <ligand>
        <name>Zn(2+)</name>
        <dbReference type="ChEBI" id="CHEBI:29105"/>
        <label>1</label>
        <note>structural for RING</note>
    </ligand>
</feature>
<feature type="binding site" evidence="3">
    <location>
        <position position="37"/>
    </location>
    <ligand>
        <name>Zn(2+)</name>
        <dbReference type="ChEBI" id="CHEBI:29105"/>
        <label>1</label>
        <note>structural for RING</note>
    </ligand>
</feature>
<feature type="binding site" evidence="3">
    <location>
        <position position="53"/>
    </location>
    <ligand>
        <name>Zn(2+)</name>
        <dbReference type="ChEBI" id="CHEBI:29105"/>
        <label>2</label>
        <note>structural for RING</note>
    </ligand>
</feature>
<feature type="binding site" evidence="3">
    <location>
        <position position="56"/>
    </location>
    <ligand>
        <name>Zn(2+)</name>
        <dbReference type="ChEBI" id="CHEBI:29105"/>
        <label>2</label>
        <note>structural for RING</note>
    </ligand>
</feature>
<feature type="binding site" evidence="5 23">
    <location>
        <position position="86"/>
    </location>
    <ligand>
        <name>Zn(2+)</name>
        <dbReference type="ChEBI" id="CHEBI:29105"/>
        <label>3</label>
        <note>structural for B-box</note>
    </ligand>
</feature>
<feature type="binding site" evidence="5 23">
    <location>
        <position position="89"/>
    </location>
    <ligand>
        <name>Zn(2+)</name>
        <dbReference type="ChEBI" id="CHEBI:29105"/>
        <label>3</label>
        <note>structural for B-box</note>
    </ligand>
</feature>
<feature type="binding site" evidence="23">
    <location>
        <position position="97"/>
    </location>
    <ligand>
        <name>Zn(2+)</name>
        <dbReference type="ChEBI" id="CHEBI:29105"/>
        <label>4</label>
        <note>structural for B-box</note>
    </ligand>
</feature>
<feature type="binding site" evidence="23">
    <location>
        <position position="100"/>
    </location>
    <ligand>
        <name>Zn(2+)</name>
        <dbReference type="ChEBI" id="CHEBI:29105"/>
        <label>4</label>
        <note>structural for B-box</note>
    </ligand>
</feature>
<feature type="binding site" evidence="23">
    <location>
        <position position="105"/>
    </location>
    <ligand>
        <name>Zn(2+)</name>
        <dbReference type="ChEBI" id="CHEBI:29105"/>
        <label>3</label>
        <note>structural for B-box</note>
    </ligand>
</feature>
<feature type="binding site" evidence="5 23">
    <location>
        <position position="108"/>
    </location>
    <ligand>
        <name>Zn(2+)</name>
        <dbReference type="ChEBI" id="CHEBI:29105"/>
        <label>3</label>
        <note>structural for B-box</note>
    </ligand>
</feature>
<feature type="binding site" evidence="5 23">
    <location>
        <position position="114"/>
    </location>
    <ligand>
        <name>Zn(2+)</name>
        <dbReference type="ChEBI" id="CHEBI:29105"/>
        <label>4</label>
        <note>structural for B-box</note>
    </ligand>
</feature>
<feature type="binding site" evidence="23">
    <location>
        <position position="117"/>
    </location>
    <ligand>
        <name>Zn(2+)</name>
        <dbReference type="ChEBI" id="CHEBI:29105"/>
        <label>4</label>
        <note>structural for B-box</note>
    </ligand>
</feature>
<feature type="modified residue" description="S-nitrosocysteine" evidence="10">
    <location>
        <position position="144"/>
    </location>
</feature>
<feature type="modified residue" description="Phosphoserine" evidence="2">
    <location>
        <position position="255"/>
    </location>
</feature>
<feature type="disulfide bond" description="Interchain" evidence="3">
    <location>
        <position position="242"/>
    </location>
</feature>
<feature type="splice variant" id="VSP_052318" description="In isoform 2." evidence="14">
    <location>
        <begin position="270"/>
        <end position="477"/>
    </location>
</feature>
<feature type="mutagenesis site" description="Disrupts membrane translocation upon peroxide and saponin treatment." evidence="12">
    <original>I</original>
    <variation>A</variation>
    <location>
        <position position="95"/>
    </location>
</feature>
<feature type="mutagenesis site" description="No decrease in level upon treatment with hydrogen peroxide." evidence="10">
    <original>C</original>
    <variation>S</variation>
    <location>
        <position position="144"/>
    </location>
</feature>
<feature type="mutagenesis site" description="Reduced cell viability upon peroxide and saponin treatment. Reduced affinity for phospho-L-serine; fails to translocate to membrane and reduced cell viability upon peroxide and saponin treatment; when associated with A-180 and A-198." evidence="12">
    <original>R</original>
    <variation>A</variation>
    <location>
        <position position="169"/>
    </location>
</feature>
<feature type="mutagenesis site" description="Reduced cell viability upon peroxide and saponin treatment." evidence="12">
    <original>R</original>
    <variation>E</variation>
    <location>
        <position position="169"/>
    </location>
</feature>
<feature type="mutagenesis site" description="Monomeric; fails to translocate to membrane; reduced cell viability upon peroxide and saponin treatment; when associated with A-179, A-183, A-186 and A-190." evidence="12">
    <original>L</original>
    <variation>A</variation>
    <location>
        <position position="176"/>
    </location>
</feature>
<feature type="mutagenesis site" description="Monomeric; fails to translocate to membrane; reduced cell viability upon peroxide and saponin treatment; when associated with A-176, A-183, A-186 and A-190." evidence="12">
    <original>M</original>
    <variation>A</variation>
    <location>
        <position position="179"/>
    </location>
</feature>
<feature type="mutagenesis site" description="Disrupts membrane translocation. Reduced cell viability upon peroxide and saponin treatment." evidence="12">
    <original>M</original>
    <variation>E</variation>
    <location>
        <position position="179"/>
    </location>
</feature>
<feature type="mutagenesis site" description="Reduced cell viability upon peroxide and saponin treatment. Reduced affinity for phospho-L-serine; fails to translocate to membrane and reduced cell viability upon peroxide and saponin treatment; when associated with A-169 and A-198." evidence="12">
    <original>R</original>
    <variation>A</variation>
    <location>
        <position position="180"/>
    </location>
</feature>
<feature type="mutagenesis site" description="Reduced cell viability upon peroxide and saponin treatment." evidence="12">
    <original>R</original>
    <variation>E</variation>
    <location>
        <position position="180"/>
    </location>
</feature>
<feature type="mutagenesis site" description="Monomeric; fails to translocate to membrane; reduced cell viability upon peroxide and saponin treatment; when associated with A-176, A-179, A-186 and A-190." evidence="12">
    <original>L</original>
    <variation>A</variation>
    <location>
        <position position="183"/>
    </location>
</feature>
<feature type="mutagenesis site" description="Monomeric; fails to translocate to membrane; reduced cell viability upon peroxide and saponin treatment; when associated with A-176, A-179, A-183 and A-190." evidence="12">
    <original>L</original>
    <variation>A</variation>
    <location>
        <position position="186"/>
    </location>
</feature>
<feature type="mutagenesis site" description="Monomeric; fails to translocate to membrane; reduced cell viability upon peroxide and saponin treatment; when associated with A-176, A-179, A-183 and A-186." evidence="12">
    <original>L</original>
    <variation>A</variation>
    <location>
        <position position="190"/>
    </location>
</feature>
<feature type="mutagenesis site" description="Reduced cell viability upon peroxide and saponin treatment. Reduced affinity for phospho-L-serine; fails to translocate to membrane and reduced cell viability upon peroxide and saponin treatment; when associated with A-169 and A-180." evidence="12">
    <original>R</original>
    <variation>A</variation>
    <location>
        <position position="198"/>
    </location>
</feature>
<feature type="mutagenesis site" description="Reduced cell viability upon peroxide and saponin treatment." evidence="12">
    <original>R</original>
    <variation>E</variation>
    <location>
        <position position="198"/>
    </location>
</feature>
<feature type="mutagenesis site" description="Reduced cell viability upon peroxide and saponin treatment." evidence="12">
    <original>R</original>
    <variation>A</variation>
    <location>
        <position position="220"/>
    </location>
</feature>
<feature type="mutagenesis site" description="Fails to translocate to membrane and reduced cell viability upon peroxide and saponin treatment." evidence="12">
    <original>R</original>
    <variation>E</variation>
    <location>
        <position position="220"/>
    </location>
</feature>
<feature type="mutagenesis site" description="Disrupts oligomerization and membrane translocation upon peroxide and saponin treatment." evidence="12">
    <original>C</original>
    <variation>S</variation>
    <location>
        <position position="242"/>
    </location>
</feature>
<feature type="mutagenesis site" description="Abolishes binding to myoblast cell membrane." evidence="13">
    <location>
        <begin position="272"/>
        <end position="281"/>
    </location>
</feature>
<feature type="mutagenesis site" description="Disrupts membrane translocation. Reduced cell viability upon peroxide and saponin treatment." evidence="12">
    <original>F</original>
    <variation>A</variation>
    <location>
        <position position="272"/>
    </location>
</feature>
<feature type="mutagenesis site" description="Disrupts membrane translocation. Reduced cell viability upon peroxide and saponin treatment." evidence="12">
    <original>W</original>
    <variation>A</variation>
    <variation>E</variation>
    <location>
        <position position="277"/>
    </location>
</feature>
<feature type="mutagenesis site" description="Disrupts membrane translocation. Reduced cell viability upon peroxide and saponin treatment." evidence="12">
    <original>K</original>
    <variation>A</variation>
    <location>
        <position position="279"/>
    </location>
</feature>
<feature type="mutagenesis site" description="Restores membrane translocation and cell viability upon peroxide and saponin treatment; when associated with K-433." evidence="12">
    <original>K</original>
    <variation>D</variation>
    <location>
        <position position="279"/>
    </location>
</feature>
<feature type="mutagenesis site" description="Abolishes binding to myoblast cell membrane." evidence="13">
    <original>RRGR</original>
    <variation>EEGE</variation>
    <location>
        <begin position="368"/>
        <end position="371"/>
    </location>
</feature>
<feature type="mutagenesis site" description="Disrupts membrane translocation. Reduced cell viability upon peroxide and saponin treatment." evidence="12">
    <original>D</original>
    <variation>A</variation>
    <location>
        <position position="433"/>
    </location>
</feature>
<feature type="mutagenesis site" description="Restores membrane translocation and cell viability upon peroxide and saponin treatment; when associated with D-279." evidence="12">
    <original>D</original>
    <variation>K</variation>
    <location>
        <position position="433"/>
    </location>
</feature>
<feature type="mutagenesis site" description="Abolishes binding to myoblast cell membrane." evidence="13">
    <original>KGK</original>
    <variation>DGD</variation>
    <location>
        <begin position="460"/>
        <end position="462"/>
    </location>
</feature>
<feature type="sequence conflict" description="In Ref. 1; BAD18630." evidence="17" ref="1">
    <original>R</original>
    <variation>C</variation>
    <location>
        <position position="192"/>
    </location>
</feature>
<feature type="sequence conflict" description="In Ref. 1; BAC03506." evidence="17" ref="1">
    <original>E</original>
    <variation>G</variation>
    <location>
        <position position="315"/>
    </location>
</feature>
<feature type="strand" evidence="26">
    <location>
        <begin position="87"/>
        <end position="89"/>
    </location>
</feature>
<feature type="strand" evidence="26">
    <location>
        <begin position="95"/>
        <end position="97"/>
    </location>
</feature>
<feature type="turn" evidence="26">
    <location>
        <begin position="98"/>
        <end position="101"/>
    </location>
</feature>
<feature type="strand" evidence="26">
    <location>
        <begin position="102"/>
        <end position="104"/>
    </location>
</feature>
<feature type="helix" evidence="26">
    <location>
        <begin position="106"/>
        <end position="110"/>
    </location>
</feature>
<feature type="strand" evidence="26">
    <location>
        <begin position="119"/>
        <end position="121"/>
    </location>
</feature>
<feature type="helix" evidence="26">
    <location>
        <begin position="122"/>
        <end position="229"/>
    </location>
</feature>
<feature type="helix" evidence="26">
    <location>
        <begin position="234"/>
        <end position="254"/>
    </location>
</feature>
<feature type="helix" evidence="25">
    <location>
        <begin position="279"/>
        <end position="284"/>
    </location>
</feature>
<feature type="turn" evidence="25">
    <location>
        <begin position="295"/>
        <end position="297"/>
    </location>
</feature>
<feature type="strand" evidence="25">
    <location>
        <begin position="302"/>
        <end position="305"/>
    </location>
</feature>
<feature type="turn" evidence="25">
    <location>
        <begin position="306"/>
        <end position="309"/>
    </location>
</feature>
<feature type="strand" evidence="25">
    <location>
        <begin position="310"/>
        <end position="313"/>
    </location>
</feature>
<feature type="strand" evidence="27">
    <location>
        <begin position="325"/>
        <end position="327"/>
    </location>
</feature>
<feature type="strand" evidence="25">
    <location>
        <begin position="329"/>
        <end position="331"/>
    </location>
</feature>
<feature type="strand" evidence="25">
    <location>
        <begin position="333"/>
        <end position="337"/>
    </location>
</feature>
<feature type="strand" evidence="25">
    <location>
        <begin position="342"/>
        <end position="350"/>
    </location>
</feature>
<feature type="strand" evidence="25">
    <location>
        <begin position="355"/>
        <end position="363"/>
    </location>
</feature>
<feature type="strand" evidence="25">
    <location>
        <begin position="369"/>
        <end position="371"/>
    </location>
</feature>
<feature type="helix" evidence="25">
    <location>
        <begin position="376"/>
        <end position="378"/>
    </location>
</feature>
<feature type="strand" evidence="25">
    <location>
        <begin position="380"/>
        <end position="386"/>
    </location>
</feature>
<feature type="turn" evidence="25">
    <location>
        <begin position="387"/>
        <end position="389"/>
    </location>
</feature>
<feature type="strand" evidence="25">
    <location>
        <begin position="390"/>
        <end position="393"/>
    </location>
</feature>
<feature type="strand" evidence="25">
    <location>
        <begin position="396"/>
        <end position="399"/>
    </location>
</feature>
<feature type="strand" evidence="25">
    <location>
        <begin position="411"/>
        <end position="418"/>
    </location>
</feature>
<feature type="turn" evidence="25">
    <location>
        <begin position="419"/>
        <end position="422"/>
    </location>
</feature>
<feature type="strand" evidence="25">
    <location>
        <begin position="423"/>
        <end position="428"/>
    </location>
</feature>
<feature type="helix" evidence="26">
    <location>
        <begin position="432"/>
        <end position="434"/>
    </location>
</feature>
<feature type="strand" evidence="25">
    <location>
        <begin position="436"/>
        <end position="441"/>
    </location>
</feature>
<feature type="strand" evidence="25">
    <location>
        <begin position="449"/>
        <end position="454"/>
    </location>
</feature>
<feature type="turn" evidence="25">
    <location>
        <begin position="459"/>
        <end position="463"/>
    </location>
</feature>
<feature type="strand" evidence="25">
    <location>
        <begin position="467"/>
        <end position="469"/>
    </location>
</feature>
<name>TRI72_HUMAN</name>
<accession>Q6ZMU5</accession>
<accession>Q8N4X6</accession>
<accession>Q8NBD9</accession>